<accession>Q0AHW1</accession>
<protein>
    <recommendedName>
        <fullName evidence="1">Ribulose bisphosphate carboxylase large chain</fullName>
        <shortName evidence="1">RuBisCO large subunit</shortName>
        <ecNumber evidence="1">4.1.1.39</ecNumber>
    </recommendedName>
</protein>
<keyword id="KW-0113">Calvin cycle</keyword>
<keyword id="KW-0120">Carbon dioxide fixation</keyword>
<keyword id="KW-0456">Lyase</keyword>
<keyword id="KW-0460">Magnesium</keyword>
<keyword id="KW-0479">Metal-binding</keyword>
<keyword id="KW-0503">Monooxygenase</keyword>
<keyword id="KW-0560">Oxidoreductase</keyword>
<feature type="chain" id="PRO_0000299966" description="Ribulose bisphosphate carboxylase large chain">
    <location>
        <begin position="1"/>
        <end position="473"/>
    </location>
</feature>
<feature type="active site" description="Proton acceptor" evidence="1">
    <location>
        <position position="168"/>
    </location>
</feature>
<feature type="active site" description="Proton acceptor" evidence="1">
    <location>
        <position position="287"/>
    </location>
</feature>
<feature type="binding site" description="in homodimeric partner" evidence="1">
    <location>
        <position position="116"/>
    </location>
    <ligand>
        <name>substrate</name>
    </ligand>
</feature>
<feature type="binding site" evidence="1">
    <location>
        <position position="166"/>
    </location>
    <ligand>
        <name>substrate</name>
    </ligand>
</feature>
<feature type="binding site" evidence="1">
    <location>
        <position position="170"/>
    </location>
    <ligand>
        <name>substrate</name>
    </ligand>
</feature>
<feature type="binding site" description="via carbamate group" evidence="1">
    <location>
        <position position="194"/>
    </location>
    <ligand>
        <name>Mg(2+)</name>
        <dbReference type="ChEBI" id="CHEBI:18420"/>
    </ligand>
</feature>
<feature type="binding site" evidence="1">
    <location>
        <position position="196"/>
    </location>
    <ligand>
        <name>Mg(2+)</name>
        <dbReference type="ChEBI" id="CHEBI:18420"/>
    </ligand>
</feature>
<feature type="binding site" evidence="1">
    <location>
        <position position="197"/>
    </location>
    <ligand>
        <name>Mg(2+)</name>
        <dbReference type="ChEBI" id="CHEBI:18420"/>
    </ligand>
</feature>
<feature type="binding site" evidence="1">
    <location>
        <position position="288"/>
    </location>
    <ligand>
        <name>substrate</name>
    </ligand>
</feature>
<feature type="binding site" evidence="1">
    <location>
        <position position="320"/>
    </location>
    <ligand>
        <name>substrate</name>
    </ligand>
</feature>
<feature type="binding site" evidence="1">
    <location>
        <position position="372"/>
    </location>
    <ligand>
        <name>substrate</name>
    </ligand>
</feature>
<feature type="site" description="Transition state stabilizer" evidence="1">
    <location>
        <position position="327"/>
    </location>
</feature>
<feature type="modified residue" description="N6-carboxylysine" evidence="1">
    <location>
        <position position="194"/>
    </location>
</feature>
<name>RBL_NITEC</name>
<proteinExistence type="inferred from homology"/>
<comment type="function">
    <text evidence="1">RuBisCO catalyzes two reactions: the carboxylation of D-ribulose 1,5-bisphosphate, the primary event in carbon dioxide fixation, as well as the oxidative fragmentation of the pentose substrate. Both reactions occur simultaneously and in competition at the same active site.</text>
</comment>
<comment type="catalytic activity">
    <reaction evidence="1">
        <text>2 (2R)-3-phosphoglycerate + 2 H(+) = D-ribulose 1,5-bisphosphate + CO2 + H2O</text>
        <dbReference type="Rhea" id="RHEA:23124"/>
        <dbReference type="ChEBI" id="CHEBI:15377"/>
        <dbReference type="ChEBI" id="CHEBI:15378"/>
        <dbReference type="ChEBI" id="CHEBI:16526"/>
        <dbReference type="ChEBI" id="CHEBI:57870"/>
        <dbReference type="ChEBI" id="CHEBI:58272"/>
        <dbReference type="EC" id="4.1.1.39"/>
    </reaction>
</comment>
<comment type="catalytic activity">
    <reaction evidence="1">
        <text>D-ribulose 1,5-bisphosphate + O2 = 2-phosphoglycolate + (2R)-3-phosphoglycerate + 2 H(+)</text>
        <dbReference type="Rhea" id="RHEA:36631"/>
        <dbReference type="ChEBI" id="CHEBI:15378"/>
        <dbReference type="ChEBI" id="CHEBI:15379"/>
        <dbReference type="ChEBI" id="CHEBI:57870"/>
        <dbReference type="ChEBI" id="CHEBI:58033"/>
        <dbReference type="ChEBI" id="CHEBI:58272"/>
    </reaction>
</comment>
<comment type="cofactor">
    <cofactor evidence="1">
        <name>Mg(2+)</name>
        <dbReference type="ChEBI" id="CHEBI:18420"/>
    </cofactor>
    <text evidence="1">Binds 1 Mg(2+) ion per subunit.</text>
</comment>
<comment type="subunit">
    <text evidence="1">Heterohexadecamer of 8 large chains and 8 small chains.</text>
</comment>
<comment type="miscellaneous">
    <text evidence="1">The basic functional RuBisCO is composed of a large chain homodimer in a 'head-to-tail' conformation. In form I RuBisCO this homodimer is arranged in a barrel-like tetramer with the small subunits forming a tetrameric 'cap' on each end of the 'barrel'.</text>
</comment>
<comment type="similarity">
    <text evidence="1">Belongs to the RuBisCO large chain family. Type I subfamily.</text>
</comment>
<reference key="1">
    <citation type="journal article" date="2007" name="Environ. Microbiol.">
        <title>Whole-genome analysis of the ammonia-oxidizing bacterium, Nitrosomonas eutropha C91: implications for niche adaptation.</title>
        <authorList>
            <person name="Stein L.Y."/>
            <person name="Arp D.J."/>
            <person name="Berube P.M."/>
            <person name="Chain P.S."/>
            <person name="Hauser L."/>
            <person name="Jetten M.S."/>
            <person name="Klotz M.G."/>
            <person name="Larimer F.W."/>
            <person name="Norton J.M."/>
            <person name="Op den Camp H.J.M."/>
            <person name="Shin M."/>
            <person name="Wei X."/>
        </authorList>
    </citation>
    <scope>NUCLEOTIDE SEQUENCE [LARGE SCALE GENOMIC DNA]</scope>
    <source>
        <strain>DSM 101675 / C91 / Nm57</strain>
    </source>
</reference>
<evidence type="ECO:0000255" key="1">
    <source>
        <dbReference type="HAMAP-Rule" id="MF_01338"/>
    </source>
</evidence>
<sequence>MAIKTYQAGVKEYRQTYWQPDYVPLDTDILACFKITPQSGVDREEAAAAVAAESSCGTWTTVWTDLLTDLDYYKGRAYRIEDVPGDDARFYAFVAYPIDLFEEGSVVNVFTSLVGNVFGFKAIRALRLEDVRFPIAYVKTCGGPPSGIQVERDKMNKYGRPLLGCTIKPKLGLSAKNYGRAVYECLRGSLDFTKDDENINSQPFMRWRDRFEFVQEATLKAEAETGERKGHYLNVTAPTPEEMYKRAEFAKEIGAPIIMHDYLAGGLCANAGLANWCRNNGMLLHVHRAMHAVLDRNPHHGIHFRVLTKILRLSGGDHLHTGTVVGKLEGDRASTLGWIDLLRESFVPEDRSRGIFFDQDWGSMPGAFAVASGGIHVWHMPALVAIFGDDSVLQFGGGTLGHPWGNAAGAHANRVALEACVQARNEGRQIEKEGREILTAAAQHSPELKIAMETWKEIKFEFDTVDKLDIAHK</sequence>
<gene>
    <name evidence="1" type="primary">cbbL</name>
    <name type="ordered locus">Neut_0804</name>
</gene>
<organism>
    <name type="scientific">Nitrosomonas eutropha (strain DSM 101675 / C91 / Nm57)</name>
    <dbReference type="NCBI Taxonomy" id="335283"/>
    <lineage>
        <taxon>Bacteria</taxon>
        <taxon>Pseudomonadati</taxon>
        <taxon>Pseudomonadota</taxon>
        <taxon>Betaproteobacteria</taxon>
        <taxon>Nitrosomonadales</taxon>
        <taxon>Nitrosomonadaceae</taxon>
        <taxon>Nitrosomonas</taxon>
    </lineage>
</organism>
<dbReference type="EC" id="4.1.1.39" evidence="1"/>
<dbReference type="EMBL" id="CP000450">
    <property type="protein sequence ID" value="ABI59071.1"/>
    <property type="molecule type" value="Genomic_DNA"/>
</dbReference>
<dbReference type="RefSeq" id="WP_011633896.1">
    <property type="nucleotide sequence ID" value="NC_008344.1"/>
</dbReference>
<dbReference type="SMR" id="Q0AHW1"/>
<dbReference type="STRING" id="335283.Neut_0804"/>
<dbReference type="KEGG" id="net:Neut_0804"/>
<dbReference type="eggNOG" id="COG1850">
    <property type="taxonomic scope" value="Bacteria"/>
</dbReference>
<dbReference type="HOGENOM" id="CLU_031450_2_0_4"/>
<dbReference type="OrthoDB" id="9770811at2"/>
<dbReference type="Proteomes" id="UP000001966">
    <property type="component" value="Chromosome"/>
</dbReference>
<dbReference type="GO" id="GO:0000287">
    <property type="term" value="F:magnesium ion binding"/>
    <property type="evidence" value="ECO:0007669"/>
    <property type="project" value="UniProtKB-UniRule"/>
</dbReference>
<dbReference type="GO" id="GO:0004497">
    <property type="term" value="F:monooxygenase activity"/>
    <property type="evidence" value="ECO:0007669"/>
    <property type="project" value="UniProtKB-KW"/>
</dbReference>
<dbReference type="GO" id="GO:0016984">
    <property type="term" value="F:ribulose-bisphosphate carboxylase activity"/>
    <property type="evidence" value="ECO:0007669"/>
    <property type="project" value="UniProtKB-UniRule"/>
</dbReference>
<dbReference type="GO" id="GO:0019253">
    <property type="term" value="P:reductive pentose-phosphate cycle"/>
    <property type="evidence" value="ECO:0007669"/>
    <property type="project" value="UniProtKB-UniRule"/>
</dbReference>
<dbReference type="Gene3D" id="3.20.20.110">
    <property type="entry name" value="Ribulose bisphosphate carboxylase, large subunit, C-terminal domain"/>
    <property type="match status" value="1"/>
</dbReference>
<dbReference type="Gene3D" id="3.30.70.150">
    <property type="entry name" value="RuBisCO large subunit, N-terminal domain"/>
    <property type="match status" value="1"/>
</dbReference>
<dbReference type="HAMAP" id="MF_01338">
    <property type="entry name" value="RuBisCO_L_type1"/>
    <property type="match status" value="1"/>
</dbReference>
<dbReference type="InterPro" id="IPR033966">
    <property type="entry name" value="RuBisCO"/>
</dbReference>
<dbReference type="InterPro" id="IPR000685">
    <property type="entry name" value="RuBisCO_lsu_C"/>
</dbReference>
<dbReference type="InterPro" id="IPR036376">
    <property type="entry name" value="RuBisCO_lsu_C_sf"/>
</dbReference>
<dbReference type="InterPro" id="IPR017443">
    <property type="entry name" value="RuBisCO_lsu_fd_N"/>
</dbReference>
<dbReference type="InterPro" id="IPR036422">
    <property type="entry name" value="RuBisCO_lsu_N_sf"/>
</dbReference>
<dbReference type="InterPro" id="IPR020888">
    <property type="entry name" value="RuBisCO_lsuI"/>
</dbReference>
<dbReference type="NCBIfam" id="NF003252">
    <property type="entry name" value="PRK04208.1"/>
    <property type="match status" value="1"/>
</dbReference>
<dbReference type="PANTHER" id="PTHR42704">
    <property type="entry name" value="RIBULOSE BISPHOSPHATE CARBOXYLASE"/>
    <property type="match status" value="1"/>
</dbReference>
<dbReference type="PANTHER" id="PTHR42704:SF17">
    <property type="entry name" value="RIBULOSE BISPHOSPHATE CARBOXYLASE LARGE CHAIN"/>
    <property type="match status" value="1"/>
</dbReference>
<dbReference type="Pfam" id="PF00016">
    <property type="entry name" value="RuBisCO_large"/>
    <property type="match status" value="1"/>
</dbReference>
<dbReference type="Pfam" id="PF02788">
    <property type="entry name" value="RuBisCO_large_N"/>
    <property type="match status" value="1"/>
</dbReference>
<dbReference type="SFLD" id="SFLDG01052">
    <property type="entry name" value="RuBisCO"/>
    <property type="match status" value="1"/>
</dbReference>
<dbReference type="SFLD" id="SFLDS00014">
    <property type="entry name" value="RuBisCO"/>
    <property type="match status" value="1"/>
</dbReference>
<dbReference type="SFLD" id="SFLDG00301">
    <property type="entry name" value="RuBisCO-like_proteins"/>
    <property type="match status" value="1"/>
</dbReference>
<dbReference type="SUPFAM" id="SSF51649">
    <property type="entry name" value="RuBisCo, C-terminal domain"/>
    <property type="match status" value="1"/>
</dbReference>
<dbReference type="SUPFAM" id="SSF54966">
    <property type="entry name" value="RuBisCO, large subunit, small (N-terminal) domain"/>
    <property type="match status" value="1"/>
</dbReference>